<comment type="function">
    <text evidence="1">Matrix protein of the sea urchin embryo spicule. The function of the matrix proteins is to direct crystal growth in certain orientations and inhibit growth in others (By similarity).</text>
</comment>
<comment type="tissue specificity">
    <text>Spines and tube feet.</text>
</comment>
<comment type="developmental stage">
    <text>Expression first detected around the onset of spicule formation and rapidly increased with the growth of spicules.</text>
</comment>
<keyword id="KW-0325">Glycoprotein</keyword>
<keyword id="KW-0732">Signal</keyword>
<dbReference type="EMBL" id="D86372">
    <property type="protein sequence ID" value="BAA13078.1"/>
    <property type="molecule type" value="mRNA"/>
</dbReference>
<dbReference type="GlyCosmos" id="Q25116">
    <property type="glycosylation" value="1 site, No reported glycans"/>
</dbReference>
<dbReference type="Gene3D" id="3.10.100.10">
    <property type="entry name" value="Mannose-Binding Protein A, subunit A"/>
    <property type="match status" value="1"/>
</dbReference>
<dbReference type="InterPro" id="IPR001304">
    <property type="entry name" value="C-type_lectin-like"/>
</dbReference>
<dbReference type="InterPro" id="IPR016186">
    <property type="entry name" value="C-type_lectin-like/link_sf"/>
</dbReference>
<dbReference type="InterPro" id="IPR016187">
    <property type="entry name" value="CTDL_fold"/>
</dbReference>
<dbReference type="InterPro" id="IPR051004">
    <property type="entry name" value="DC-SIGN_domain-containing"/>
</dbReference>
<dbReference type="PANTHER" id="PTHR22802">
    <property type="entry name" value="C-TYPE LECTIN SUPERFAMILY MEMBER"/>
    <property type="match status" value="1"/>
</dbReference>
<dbReference type="PANTHER" id="PTHR22802:SF379">
    <property type="entry name" value="CHONDROITIN SULFATE PROTEOGLYCAN 2 ISOFORM X1"/>
    <property type="match status" value="1"/>
</dbReference>
<dbReference type="Pfam" id="PF00059">
    <property type="entry name" value="Lectin_C"/>
    <property type="match status" value="1"/>
</dbReference>
<dbReference type="SMART" id="SM00034">
    <property type="entry name" value="CLECT"/>
    <property type="match status" value="1"/>
</dbReference>
<dbReference type="SUPFAM" id="SSF56436">
    <property type="entry name" value="C-type lectin-like"/>
    <property type="match status" value="1"/>
</dbReference>
<dbReference type="PROSITE" id="PS50041">
    <property type="entry name" value="C_TYPE_LECTIN_2"/>
    <property type="match status" value="1"/>
</dbReference>
<gene>
    <name type="primary">SM30</name>
</gene>
<protein>
    <recommendedName>
        <fullName>30 kDa spicule matrix protein</fullName>
    </recommendedName>
</protein>
<feature type="signal peptide" evidence="2">
    <location>
        <begin position="1"/>
        <end position="20"/>
    </location>
</feature>
<feature type="chain" id="PRO_0000017558" description="30 kDa spicule matrix protein">
    <location>
        <begin position="21"/>
        <end position="288"/>
    </location>
</feature>
<feature type="domain" description="C-type lectin" evidence="3">
    <location>
        <begin position="93"/>
        <end position="163"/>
    </location>
</feature>
<feature type="glycosylation site" description="N-linked (GlcNAc...) asparagine" evidence="2">
    <location>
        <position position="103"/>
    </location>
</feature>
<proteinExistence type="evidence at transcript level"/>
<evidence type="ECO:0000250" key="1"/>
<evidence type="ECO:0000255" key="2"/>
<evidence type="ECO:0000255" key="3">
    <source>
        <dbReference type="PROSITE-ProRule" id="PRU00040"/>
    </source>
</evidence>
<reference key="1">
    <citation type="journal article" date="1996" name="Dev. Growth Differ.">
        <title>Expression of spicule matrix protein gene SM30 in embryonic and adult mineralized tissues of sea urchin Hemicentrotus pulcherrimus.</title>
        <authorList>
            <person name="Kitajima T."/>
            <person name="Tomita M."/>
            <person name="Killian C.E."/>
            <person name="Akasaka K."/>
            <person name="Wilt F.H."/>
        </authorList>
    </citation>
    <scope>NUCLEOTIDE SEQUENCE [MRNA]</scope>
</reference>
<name>SM30_HEMPU</name>
<sequence length="288" mass="31587">MRCFVYVLVCVVASVSYSRAQLPGAGGPGVFPGGVPTIGPVIPDPTRTETCAKFWVQEGDSCYLFDSGAFLRQVAASRPVVVNNQDGLFQAAANMYCGQMHPNATLVTVNSLAENNFLYEWAVRMMVEPEPVWIGLHVGPAGLWQWYSGEPVTYTNWEGMVAPRAELGLGAMIFDADIIAQMFNNQVEITPQWVPEHGRNDRHSLICEYHPSGMTAAATNAPTTPPMATAPPMAATTRSPVMFQNNPGNLVNRLTGGRFGGSLLHEIPRRQRMRPSNYRKNPYFGIQP</sequence>
<organism>
    <name type="scientific">Hemicentrotus pulcherrimus</name>
    <name type="common">Sea urchin</name>
    <name type="synonym">Strongylocentrotus pulcherrimus</name>
    <dbReference type="NCBI Taxonomy" id="7650"/>
    <lineage>
        <taxon>Eukaryota</taxon>
        <taxon>Metazoa</taxon>
        <taxon>Echinodermata</taxon>
        <taxon>Eleutherozoa</taxon>
        <taxon>Echinozoa</taxon>
        <taxon>Echinoidea</taxon>
        <taxon>Euechinoidea</taxon>
        <taxon>Echinacea</taxon>
        <taxon>Camarodonta</taxon>
        <taxon>Echinidea</taxon>
        <taxon>Strongylocentrotidae</taxon>
        <taxon>Hemicentrotus</taxon>
    </lineage>
</organism>
<accession>Q25116</accession>